<proteinExistence type="evidence at protein level"/>
<dbReference type="EMBL" id="J01730">
    <property type="protein sequence ID" value="AAA92262.1"/>
    <property type="molecule type" value="Genomic_DNA"/>
</dbReference>
<dbReference type="EMBL" id="K03089">
    <property type="protein sequence ID" value="AAB59076.1"/>
    <property type="molecule type" value="Genomic_DNA"/>
</dbReference>
<dbReference type="PIR" id="A03556">
    <property type="entry name" value="RGEBHD"/>
</dbReference>
<dbReference type="PIR" id="S09524">
    <property type="entry name" value="S09524"/>
</dbReference>
<dbReference type="RefSeq" id="WP_000732292.1">
    <property type="nucleotide sequence ID" value="NZ_WPET01000167.1"/>
</dbReference>
<dbReference type="PDB" id="1AFI">
    <property type="method" value="NMR"/>
    <property type="chains" value="A=20-91"/>
</dbReference>
<dbReference type="PDB" id="1AFJ">
    <property type="method" value="NMR"/>
    <property type="chains" value="A=20-91"/>
</dbReference>
<dbReference type="PDB" id="1DVW">
    <property type="method" value="NMR"/>
    <property type="chains" value="A=25-42"/>
</dbReference>
<dbReference type="PDB" id="2HQI">
    <property type="method" value="NMR"/>
    <property type="chains" value="A=20-91"/>
</dbReference>
<dbReference type="PDBsum" id="1AFI"/>
<dbReference type="PDBsum" id="1AFJ"/>
<dbReference type="PDBsum" id="1DVW"/>
<dbReference type="PDBsum" id="2HQI"/>
<dbReference type="SMR" id="P04129"/>
<dbReference type="GeneID" id="93248041"/>
<dbReference type="EvolutionaryTrace" id="P04129"/>
<dbReference type="GO" id="GO:0042597">
    <property type="term" value="C:periplasmic space"/>
    <property type="evidence" value="ECO:0007669"/>
    <property type="project" value="UniProtKB-SubCell"/>
</dbReference>
<dbReference type="GO" id="GO:0045340">
    <property type="term" value="F:mercury ion binding"/>
    <property type="evidence" value="ECO:0007669"/>
    <property type="project" value="InterPro"/>
</dbReference>
<dbReference type="GO" id="GO:0015097">
    <property type="term" value="F:mercury ion transmembrane transporter activity"/>
    <property type="evidence" value="ECO:0007669"/>
    <property type="project" value="InterPro"/>
</dbReference>
<dbReference type="CDD" id="cd00371">
    <property type="entry name" value="HMA"/>
    <property type="match status" value="1"/>
</dbReference>
<dbReference type="FunFam" id="3.30.70.100:FF:000005">
    <property type="entry name" value="Copper-exporting P-type ATPase A"/>
    <property type="match status" value="1"/>
</dbReference>
<dbReference type="Gene3D" id="3.30.70.100">
    <property type="match status" value="1"/>
</dbReference>
<dbReference type="InterPro" id="IPR017969">
    <property type="entry name" value="Heavy-metal-associated_CS"/>
</dbReference>
<dbReference type="InterPro" id="IPR006121">
    <property type="entry name" value="HMA_dom"/>
</dbReference>
<dbReference type="InterPro" id="IPR036163">
    <property type="entry name" value="HMA_dom_sf"/>
</dbReference>
<dbReference type="InterPro" id="IPR011795">
    <property type="entry name" value="MerP"/>
</dbReference>
<dbReference type="InterPro" id="IPR001802">
    <property type="entry name" value="MerP/CopZ"/>
</dbReference>
<dbReference type="NCBIfam" id="TIGR02052">
    <property type="entry name" value="MerP"/>
    <property type="match status" value="1"/>
</dbReference>
<dbReference type="PANTHER" id="PTHR46594">
    <property type="entry name" value="P-TYPE CATION-TRANSPORTING ATPASE"/>
    <property type="match status" value="1"/>
</dbReference>
<dbReference type="PANTHER" id="PTHR46594:SF4">
    <property type="entry name" value="P-TYPE CATION-TRANSPORTING ATPASE"/>
    <property type="match status" value="1"/>
</dbReference>
<dbReference type="Pfam" id="PF00403">
    <property type="entry name" value="HMA"/>
    <property type="match status" value="1"/>
</dbReference>
<dbReference type="PRINTS" id="PR00946">
    <property type="entry name" value="HGSCAVENGER"/>
</dbReference>
<dbReference type="SUPFAM" id="SSF55008">
    <property type="entry name" value="HMA, heavy metal-associated domain"/>
    <property type="match status" value="1"/>
</dbReference>
<dbReference type="PROSITE" id="PS01047">
    <property type="entry name" value="HMA_1"/>
    <property type="match status" value="1"/>
</dbReference>
<dbReference type="PROSITE" id="PS50846">
    <property type="entry name" value="HMA_2"/>
    <property type="match status" value="1"/>
</dbReference>
<protein>
    <recommendedName>
        <fullName evidence="8">Mercuric transport protein periplasmic component</fullName>
    </recommendedName>
    <alternativeName>
        <fullName evidence="8">Mercury scavenger protein</fullName>
    </alternativeName>
    <alternativeName>
        <fullName evidence="8">Periplasmic mercury ion-binding protein</fullName>
    </alternativeName>
</protein>
<sequence length="91" mass="9414">MKKLFASLALAAAVAPVWAATQTVTLAVPGMTCAACPITVKKALSKVEGVSKVDVGFEKREAVVTFDDTKASVQKLTKATADAGYPSSVKQ</sequence>
<gene>
    <name evidence="7" type="primary">merP</name>
</gene>
<accession>P04129</accession>
<accession>P07042</accession>
<comment type="function">
    <text evidence="3 5 6 9">Involved in mercury resistance (PubMed:1328156). Acts as a mercury scavenger that specifically binds to a mercuric ion in the periplasm and probably passes it to the cytoplasmic mercuric reductase MerA via the mercuric transport protein MerT (PubMed:9368013, PubMed:9649312).</text>
</comment>
<comment type="subunit">
    <text evidence="1">Monomer.</text>
</comment>
<comment type="subcellular location">
    <subcellularLocation>
        <location evidence="8">Periplasm</location>
    </subcellularLocation>
</comment>
<comment type="disruption phenotype">
    <text evidence="3">Mutation decreases resistance to mercury.</text>
</comment>
<comment type="similarity">
    <text evidence="8">Belongs to the MerP family.</text>
</comment>
<name>MERP_SHIFL</name>
<keyword id="KW-0002">3D-structure</keyword>
<keyword id="KW-0475">Mercuric resistance</keyword>
<keyword id="KW-0476">Mercury</keyword>
<keyword id="KW-0479">Metal-binding</keyword>
<keyword id="KW-0574">Periplasm</keyword>
<keyword id="KW-0614">Plasmid</keyword>
<keyword id="KW-0732">Signal</keyword>
<keyword id="KW-0814">Transposable element</keyword>
<reference key="1">
    <citation type="journal article" date="1984" name="Proc. Natl. Acad. Sci. U.S.A.">
        <title>Mercuric ion-resistance operons of plasmid R100 and transposon Tn501: the beginning of the operon including the regulatory region and the first two structural genes.</title>
        <authorList>
            <person name="Misra T.K."/>
            <person name="Brown N.L."/>
            <person name="Fritzinger D.C."/>
            <person name="Pridmore R.D."/>
            <person name="Barnes W.M."/>
            <person name="Haberstroh L."/>
            <person name="Silver S."/>
        </authorList>
    </citation>
    <scope>NUCLEOTIDE SEQUENCE [GENOMIC DNA]</scope>
    <scope>PROBABLE FUNCTION</scope>
</reference>
<reference key="2">
    <citation type="journal article" date="1984" name="J. Mol. Appl. Genet.">
        <title>The DNA sequence of the mercury resistance operon of the IncFII plasmid NR1.</title>
        <authorList>
            <person name="Barrineau P."/>
            <person name="Gilbert P."/>
            <person name="Jackson W.J."/>
            <person name="Jones C.S."/>
            <person name="Summers A.O."/>
            <person name="Wisdom S."/>
        </authorList>
    </citation>
    <scope>NUCLEOTIDE SEQUENCE [GENOMIC DNA]</scope>
    <source>
        <transposon>Tn21</transposon>
    </source>
</reference>
<reference key="3">
    <citation type="journal article" date="1992" name="J. Bacteriol.">
        <title>Roles of the Tn21 merT, merP, and merC gene products in mercury resistance and mercury binding.</title>
        <authorList>
            <person name="Hamlett N.V."/>
            <person name="Landale E.C."/>
            <person name="Davis B.H."/>
            <person name="Summers A.O."/>
        </authorList>
    </citation>
    <scope>FUNCTION</scope>
    <scope>DISRUPTION PHENOTYPE</scope>
</reference>
<reference key="4">
    <citation type="journal article" date="1997" name="J. Biol. Chem.">
        <title>A mercuric ion uptake role for the integral inner membrane protein, MerC, involved in bacterial mercuric ion resistance.</title>
        <authorList>
            <person name="Sahlman L."/>
            <person name="Wong W."/>
            <person name="Powlowski J."/>
        </authorList>
    </citation>
    <scope>FUNCTION</scope>
</reference>
<reference evidence="10 11" key="5">
    <citation type="journal article" date="1997" name="Biochemistry">
        <title>Structures of the reduced and mercury-bound forms of MerP, the periplasmic protein from the bacterial mercury detoxification system.</title>
        <authorList>
            <person name="Steele R.A."/>
            <person name="Opella S.J."/>
        </authorList>
    </citation>
    <scope>STRUCTURE BY NMR OF 20-91</scope>
    <scope>HG(2+)-BINDING</scope>
</reference>
<reference evidence="12" key="6">
    <citation type="journal article" date="1998" name="Biochemistry">
        <title>NMR solution structure of the oxidized form of MerP, a mercuric ion binding protein involved in bacterial mercuric ion resistance.</title>
        <authorList>
            <person name="Qian H."/>
            <person name="Sahlman L."/>
            <person name="Eriksson P.O."/>
            <person name="Hambraeus C."/>
            <person name="Edlund U."/>
            <person name="Sethson I."/>
        </authorList>
    </citation>
    <scope>STRUCTURE BY NMR OF 20-91</scope>
    <scope>FUNCTION</scope>
</reference>
<feature type="signal peptide">
    <location>
        <begin position="1"/>
        <end position="19"/>
    </location>
</feature>
<feature type="chain" id="PRO_0000021679" description="Mercuric transport protein periplasmic component">
    <location>
        <begin position="20"/>
        <end position="91"/>
    </location>
</feature>
<feature type="domain" description="HMA" evidence="2">
    <location>
        <begin position="22"/>
        <end position="88"/>
    </location>
</feature>
<feature type="binding site" evidence="2 4">
    <location>
        <position position="33"/>
    </location>
    <ligand>
        <name>Hg(2+)</name>
        <dbReference type="ChEBI" id="CHEBI:16793"/>
    </ligand>
</feature>
<feature type="binding site" evidence="2 4">
    <location>
        <position position="36"/>
    </location>
    <ligand>
        <name>Hg(2+)</name>
        <dbReference type="ChEBI" id="CHEBI:16793"/>
    </ligand>
</feature>
<feature type="sequence conflict" description="In Ref. 2; AAB59076." evidence="8" ref="2">
    <original>S</original>
    <variation>T</variation>
    <location>
        <position position="51"/>
    </location>
</feature>
<feature type="strand" evidence="13">
    <location>
        <begin position="22"/>
        <end position="27"/>
    </location>
</feature>
<feature type="turn" evidence="14">
    <location>
        <begin position="29"/>
        <end position="32"/>
    </location>
</feature>
<feature type="strand" evidence="13">
    <location>
        <begin position="33"/>
        <end position="35"/>
    </location>
</feature>
<feature type="helix" evidence="13">
    <location>
        <begin position="36"/>
        <end position="45"/>
    </location>
</feature>
<feature type="strand" evidence="13">
    <location>
        <begin position="48"/>
        <end position="56"/>
    </location>
</feature>
<feature type="turn" evidence="13">
    <location>
        <begin position="57"/>
        <end position="60"/>
    </location>
</feature>
<feature type="strand" evidence="13">
    <location>
        <begin position="61"/>
        <end position="66"/>
    </location>
</feature>
<feature type="turn" evidence="13">
    <location>
        <begin position="68"/>
        <end position="70"/>
    </location>
</feature>
<feature type="helix" evidence="13">
    <location>
        <begin position="73"/>
        <end position="83"/>
    </location>
</feature>
<feature type="strand" evidence="14">
    <location>
        <begin position="88"/>
        <end position="90"/>
    </location>
</feature>
<geneLocation type="plasmid">
    <name>IncFII R100</name>
    <name>NR1</name>
</geneLocation>
<organism>
    <name type="scientific">Shigella flexneri</name>
    <dbReference type="NCBI Taxonomy" id="623"/>
    <lineage>
        <taxon>Bacteria</taxon>
        <taxon>Pseudomonadati</taxon>
        <taxon>Pseudomonadota</taxon>
        <taxon>Gammaproteobacteria</taxon>
        <taxon>Enterobacterales</taxon>
        <taxon>Enterobacteriaceae</taxon>
        <taxon>Shigella</taxon>
    </lineage>
</organism>
<evidence type="ECO:0000250" key="1">
    <source>
        <dbReference type="UniProtKB" id="P13113"/>
    </source>
</evidence>
<evidence type="ECO:0000255" key="2">
    <source>
        <dbReference type="PROSITE-ProRule" id="PRU00280"/>
    </source>
</evidence>
<evidence type="ECO:0000269" key="3">
    <source>
    </source>
</evidence>
<evidence type="ECO:0000269" key="4">
    <source>
    </source>
</evidence>
<evidence type="ECO:0000269" key="5">
    <source>
    </source>
</evidence>
<evidence type="ECO:0000269" key="6">
    <source>
    </source>
</evidence>
<evidence type="ECO:0000303" key="7">
    <source>
    </source>
</evidence>
<evidence type="ECO:0000305" key="8"/>
<evidence type="ECO:0000305" key="9">
    <source>
    </source>
</evidence>
<evidence type="ECO:0007744" key="10">
    <source>
        <dbReference type="PDB" id="1AFI"/>
    </source>
</evidence>
<evidence type="ECO:0007744" key="11">
    <source>
        <dbReference type="PDB" id="1AFJ"/>
    </source>
</evidence>
<evidence type="ECO:0007744" key="12">
    <source>
        <dbReference type="PDB" id="2HQI"/>
    </source>
</evidence>
<evidence type="ECO:0007829" key="13">
    <source>
        <dbReference type="PDB" id="1AFI"/>
    </source>
</evidence>
<evidence type="ECO:0007829" key="14">
    <source>
        <dbReference type="PDB" id="2HQI"/>
    </source>
</evidence>